<accession>D2Y3T5</accession>
<reference key="1">
    <citation type="journal article" date="2011" name="Toxicon">
        <title>Diversity of conotoxin types from Conus californicus reflects a diversity of prey types and a novel evolutionary history.</title>
        <authorList>
            <person name="Elliger C.A."/>
            <person name="Richmond T.A."/>
            <person name="Lebaric Z.N."/>
            <person name="Pierce N.T."/>
            <person name="Sweedler J.V."/>
            <person name="Gilly W.F."/>
        </authorList>
    </citation>
    <scope>NUCLEOTIDE SEQUENCE [MRNA]</scope>
    <source>
        <tissue>Venom duct</tissue>
    </source>
</reference>
<feature type="propeptide" id="PRO_0000414948" evidence="4">
    <location>
        <begin position="1" status="less than"/>
        <end position="6"/>
    </location>
</feature>
<feature type="peptide" id="PRO_5000570805" description="Conotoxin Cal9.2c" evidence="4">
    <location>
        <begin position="8"/>
        <end position="52"/>
    </location>
</feature>
<feature type="disulfide bond" evidence="1">
    <location>
        <begin position="14"/>
        <end position="31"/>
    </location>
</feature>
<feature type="disulfide bond" evidence="1">
    <location>
        <begin position="19"/>
        <end position="41"/>
    </location>
</feature>
<feature type="disulfide bond" evidence="1">
    <location>
        <begin position="21"/>
        <end position="46"/>
    </location>
</feature>
<feature type="non-terminal residue">
    <location>
        <position position="1"/>
    </location>
</feature>
<name>CU92C_CONCL</name>
<proteinExistence type="evidence at transcript level"/>
<organism>
    <name type="scientific">Californiconus californicus</name>
    <name type="common">California cone</name>
    <name type="synonym">Conus californicus</name>
    <dbReference type="NCBI Taxonomy" id="1736779"/>
    <lineage>
        <taxon>Eukaryota</taxon>
        <taxon>Metazoa</taxon>
        <taxon>Spiralia</taxon>
        <taxon>Lophotrochozoa</taxon>
        <taxon>Mollusca</taxon>
        <taxon>Gastropoda</taxon>
        <taxon>Caenogastropoda</taxon>
        <taxon>Neogastropoda</taxon>
        <taxon>Conoidea</taxon>
        <taxon>Conidae</taxon>
        <taxon>Californiconus</taxon>
    </lineage>
</organism>
<protein>
    <recommendedName>
        <fullName evidence="2">Conotoxin Cal9.2c</fullName>
    </recommendedName>
</protein>
<keyword id="KW-1015">Disulfide bond</keyword>
<keyword id="KW-0872">Ion channel impairing toxin</keyword>
<keyword id="KW-0528">Neurotoxin</keyword>
<keyword id="KW-0964">Secreted</keyword>
<keyword id="KW-0800">Toxin</keyword>
<evidence type="ECO:0000250" key="1"/>
<evidence type="ECO:0000303" key="2">
    <source>
    </source>
</evidence>
<evidence type="ECO:0000305" key="3"/>
<evidence type="ECO:0000305" key="4">
    <source>
    </source>
</evidence>
<dbReference type="EMBL" id="GU299517">
    <property type="protein sequence ID" value="ADB65792.1"/>
    <property type="molecule type" value="mRNA"/>
</dbReference>
<dbReference type="ConoServer" id="3992">
    <property type="toxin name" value="Cal9.2c precursor"/>
</dbReference>
<dbReference type="GO" id="GO:0005576">
    <property type="term" value="C:extracellular region"/>
    <property type="evidence" value="ECO:0007669"/>
    <property type="project" value="UniProtKB-SubCell"/>
</dbReference>
<dbReference type="GO" id="GO:0099106">
    <property type="term" value="F:ion channel regulator activity"/>
    <property type="evidence" value="ECO:0007669"/>
    <property type="project" value="UniProtKB-KW"/>
</dbReference>
<dbReference type="GO" id="GO:0090729">
    <property type="term" value="F:toxin activity"/>
    <property type="evidence" value="ECO:0007669"/>
    <property type="project" value="UniProtKB-KW"/>
</dbReference>
<comment type="function">
    <text evidence="3">Probable neurotoxin with unknown target. Possibly targets ion channels.</text>
</comment>
<comment type="subcellular location">
    <subcellularLocation>
        <location evidence="4">Secreted</location>
    </subcellularLocation>
</comment>
<comment type="tissue specificity">
    <text evidence="4">Expressed by the venom duct.</text>
</comment>
<comment type="domain">
    <text>The cysteine framework is IX (C-C-C-C-C-C).</text>
</comment>
<sequence>KKGVTLREDDRFPCNAGNCACLPLDSYSYTCQSPTSSTANCEGNECRSEADW</sequence>